<gene>
    <name evidence="1" type="primary">mdtA</name>
    <name type="ordered locus">EFER_2161</name>
</gene>
<name>MDTA_ESCF3</name>
<accession>B7LV38</accession>
<feature type="signal peptide" evidence="1">
    <location>
        <begin position="1"/>
        <end position="21"/>
    </location>
</feature>
<feature type="chain" id="PRO_1000145641" description="Multidrug resistance protein MdtA">
    <location>
        <begin position="22"/>
        <end position="415"/>
    </location>
</feature>
<feature type="region of interest" description="Disordered" evidence="2">
    <location>
        <begin position="34"/>
        <end position="60"/>
    </location>
</feature>
<feature type="region of interest" description="Disordered" evidence="2">
    <location>
        <begin position="392"/>
        <end position="415"/>
    </location>
</feature>
<feature type="compositionally biased region" description="Polar residues" evidence="2">
    <location>
        <begin position="34"/>
        <end position="47"/>
    </location>
</feature>
<feature type="compositionally biased region" description="Basic and acidic residues" evidence="2">
    <location>
        <begin position="399"/>
        <end position="415"/>
    </location>
</feature>
<reference key="1">
    <citation type="journal article" date="2009" name="PLoS Genet.">
        <title>Organised genome dynamics in the Escherichia coli species results in highly diverse adaptive paths.</title>
        <authorList>
            <person name="Touchon M."/>
            <person name="Hoede C."/>
            <person name="Tenaillon O."/>
            <person name="Barbe V."/>
            <person name="Baeriswyl S."/>
            <person name="Bidet P."/>
            <person name="Bingen E."/>
            <person name="Bonacorsi S."/>
            <person name="Bouchier C."/>
            <person name="Bouvet O."/>
            <person name="Calteau A."/>
            <person name="Chiapello H."/>
            <person name="Clermont O."/>
            <person name="Cruveiller S."/>
            <person name="Danchin A."/>
            <person name="Diard M."/>
            <person name="Dossat C."/>
            <person name="Karoui M.E."/>
            <person name="Frapy E."/>
            <person name="Garry L."/>
            <person name="Ghigo J.M."/>
            <person name="Gilles A.M."/>
            <person name="Johnson J."/>
            <person name="Le Bouguenec C."/>
            <person name="Lescat M."/>
            <person name="Mangenot S."/>
            <person name="Martinez-Jehanne V."/>
            <person name="Matic I."/>
            <person name="Nassif X."/>
            <person name="Oztas S."/>
            <person name="Petit M.A."/>
            <person name="Pichon C."/>
            <person name="Rouy Z."/>
            <person name="Ruf C.S."/>
            <person name="Schneider D."/>
            <person name="Tourret J."/>
            <person name="Vacherie B."/>
            <person name="Vallenet D."/>
            <person name="Medigue C."/>
            <person name="Rocha E.P.C."/>
            <person name="Denamur E."/>
        </authorList>
    </citation>
    <scope>NUCLEOTIDE SEQUENCE [LARGE SCALE GENOMIC DNA]</scope>
    <source>
        <strain>ATCC 35469 / DSM 13698 / BCRC 15582 / CCUG 18766 / IAM 14443 / JCM 21226 / LMG 7866 / NBRC 102419 / NCTC 12128 / CDC 0568-73</strain>
    </source>
</reference>
<organism>
    <name type="scientific">Escherichia fergusonii (strain ATCC 35469 / DSM 13698 / CCUG 18766 / IAM 14443 / JCM 21226 / LMG 7866 / NBRC 102419 / NCTC 12128 / CDC 0568-73)</name>
    <dbReference type="NCBI Taxonomy" id="585054"/>
    <lineage>
        <taxon>Bacteria</taxon>
        <taxon>Pseudomonadati</taxon>
        <taxon>Pseudomonadota</taxon>
        <taxon>Gammaproteobacteria</taxon>
        <taxon>Enterobacterales</taxon>
        <taxon>Enterobacteriaceae</taxon>
        <taxon>Escherichia</taxon>
    </lineage>
</organism>
<sequence length="415" mass="44546">MKGSYKSRWVIVIVVVIAAIAAFWFWQGRNESQSAAPGATKQAQQSPAGGRRGMRSGPLAPVQAATAVEQAVPRYLTGLGTITAANTVTVRSRVDGQLMALHFQEGQQVKAGDLLAEIDPSQFKVALAQAQGQLAKDKATLANARRDLARYQQLAKTNLVSRQELDAQQALVSETEGTFKADEASVASAQLQLDWSRITAPVDGRVGLKQVDVGNQISSGDTTGIVVITQTHPIDLLFTLPESDITTVVQAQKAGKPLVVEAWDRTNSKKLSEGTLLSLDNQIDATTGTIKVKARFNNQDDALFPNQFVNARMLVDTEQNAVVIPTAALQMGNEGHFVWVLNSENKVSKHLVTPGIQDSQKVVIRAGISAGDRVVTDGIDRLTEGAKVEVVEAQSATTPEEKATSREYAKKGARS</sequence>
<protein>
    <recommendedName>
        <fullName evidence="1">Multidrug resistance protein MdtA</fullName>
    </recommendedName>
    <alternativeName>
        <fullName evidence="1">Multidrug transporter MdtA</fullName>
    </alternativeName>
</protein>
<proteinExistence type="inferred from homology"/>
<comment type="function">
    <text evidence="1">The MdtABC tripartite complex confers resistance against novobiocin and deoxycholate.</text>
</comment>
<comment type="subunit">
    <text evidence="1">Part of a tripartite efflux system composed of MdtA, MdtB and MdtC.</text>
</comment>
<comment type="subcellular location">
    <subcellularLocation>
        <location evidence="1">Cell inner membrane</location>
        <topology evidence="1">Peripheral membrane protein</topology>
    </subcellularLocation>
</comment>
<comment type="induction">
    <text evidence="1">The mdtABC operon is transcriptionally activated by BaeR.</text>
</comment>
<comment type="similarity">
    <text evidence="1">Belongs to the membrane fusion protein (MFP) (TC 8.A.1) family.</text>
</comment>
<evidence type="ECO:0000255" key="1">
    <source>
        <dbReference type="HAMAP-Rule" id="MF_01422"/>
    </source>
</evidence>
<evidence type="ECO:0000256" key="2">
    <source>
        <dbReference type="SAM" id="MobiDB-lite"/>
    </source>
</evidence>
<dbReference type="EMBL" id="CU928158">
    <property type="protein sequence ID" value="CAQ89664.1"/>
    <property type="molecule type" value="Genomic_DNA"/>
</dbReference>
<dbReference type="RefSeq" id="WP_000679019.1">
    <property type="nucleotide sequence ID" value="NC_011740.1"/>
</dbReference>
<dbReference type="SMR" id="B7LV38"/>
<dbReference type="GeneID" id="75056803"/>
<dbReference type="KEGG" id="efe:EFER_2161"/>
<dbReference type="HOGENOM" id="CLU_018816_2_0_6"/>
<dbReference type="OrthoDB" id="9783047at2"/>
<dbReference type="Proteomes" id="UP000000745">
    <property type="component" value="Chromosome"/>
</dbReference>
<dbReference type="GO" id="GO:1990281">
    <property type="term" value="C:efflux pump complex"/>
    <property type="evidence" value="ECO:0007669"/>
    <property type="project" value="TreeGrafter"/>
</dbReference>
<dbReference type="GO" id="GO:0005886">
    <property type="term" value="C:plasma membrane"/>
    <property type="evidence" value="ECO:0007669"/>
    <property type="project" value="UniProtKB-SubCell"/>
</dbReference>
<dbReference type="GO" id="GO:0015562">
    <property type="term" value="F:efflux transmembrane transporter activity"/>
    <property type="evidence" value="ECO:0007669"/>
    <property type="project" value="TreeGrafter"/>
</dbReference>
<dbReference type="FunFam" id="2.40.420.20:FF:000001">
    <property type="entry name" value="Efflux RND transporter periplasmic adaptor subunit"/>
    <property type="match status" value="1"/>
</dbReference>
<dbReference type="FunFam" id="1.10.287.470:FF:000005">
    <property type="entry name" value="Multidrug resistance protein MdtA"/>
    <property type="match status" value="1"/>
</dbReference>
<dbReference type="FunFam" id="2.40.30.170:FF:000006">
    <property type="entry name" value="Multidrug resistance protein MdtA"/>
    <property type="match status" value="1"/>
</dbReference>
<dbReference type="Gene3D" id="2.40.30.170">
    <property type="match status" value="1"/>
</dbReference>
<dbReference type="Gene3D" id="2.40.420.20">
    <property type="match status" value="1"/>
</dbReference>
<dbReference type="Gene3D" id="2.40.50.100">
    <property type="match status" value="1"/>
</dbReference>
<dbReference type="Gene3D" id="1.10.287.470">
    <property type="entry name" value="Helix hairpin bin"/>
    <property type="match status" value="1"/>
</dbReference>
<dbReference type="HAMAP" id="MF_01422">
    <property type="entry name" value="MdtA"/>
    <property type="match status" value="1"/>
</dbReference>
<dbReference type="InterPro" id="IPR032317">
    <property type="entry name" value="CusB_D23"/>
</dbReference>
<dbReference type="InterPro" id="IPR022824">
    <property type="entry name" value="Multidrug-R_MdtA"/>
</dbReference>
<dbReference type="InterPro" id="IPR006143">
    <property type="entry name" value="RND_pump_MFP"/>
</dbReference>
<dbReference type="NCBIfam" id="NF008589">
    <property type="entry name" value="PRK11556.1"/>
    <property type="match status" value="1"/>
</dbReference>
<dbReference type="NCBIfam" id="TIGR01730">
    <property type="entry name" value="RND_mfp"/>
    <property type="match status" value="1"/>
</dbReference>
<dbReference type="PANTHER" id="PTHR30469">
    <property type="entry name" value="MULTIDRUG RESISTANCE PROTEIN MDTA"/>
    <property type="match status" value="1"/>
</dbReference>
<dbReference type="PANTHER" id="PTHR30469:SF12">
    <property type="entry name" value="MULTIDRUG RESISTANCE PROTEIN MDTA"/>
    <property type="match status" value="1"/>
</dbReference>
<dbReference type="Pfam" id="PF16576">
    <property type="entry name" value="HlyD_D23"/>
    <property type="match status" value="1"/>
</dbReference>
<dbReference type="SUPFAM" id="SSF111369">
    <property type="entry name" value="HlyD-like secretion proteins"/>
    <property type="match status" value="1"/>
</dbReference>
<keyword id="KW-0997">Cell inner membrane</keyword>
<keyword id="KW-1003">Cell membrane</keyword>
<keyword id="KW-0472">Membrane</keyword>
<keyword id="KW-0732">Signal</keyword>
<keyword id="KW-0813">Transport</keyword>